<organism>
    <name type="scientific">Methanocaldococcus jannaschii (strain ATCC 43067 / DSM 2661 / JAL-1 / JCM 10045 / NBRC 100440)</name>
    <name type="common">Methanococcus jannaschii</name>
    <dbReference type="NCBI Taxonomy" id="243232"/>
    <lineage>
        <taxon>Archaea</taxon>
        <taxon>Methanobacteriati</taxon>
        <taxon>Methanobacteriota</taxon>
        <taxon>Methanomada group</taxon>
        <taxon>Methanococci</taxon>
        <taxon>Methanococcales</taxon>
        <taxon>Methanocaldococcaceae</taxon>
        <taxon>Methanocaldococcus</taxon>
    </lineage>
</organism>
<sequence length="244" mass="27659">MAKKGPKRHLKRLAAPVRWELPRKIHKFTVRPLPGAHPMSESLPLLLIVRDILKYADNAREAKKIIKMGKVLVDGRVRKEEKLPVGLMDVVSLPDANENYRVLFDRKGRIKLKPTENPDVKLCKIKNKTVIKGGHIQLNLHDGRNIVIKVSDPTKAEEDVYKTGDTLLISIPEQEIKAHIPFEVGKLAYITGGKHVGDFAKIVEIERRGIYPDIVTLENMDGEKFKTVKDYVFVVGDEEPIIKL</sequence>
<protein>
    <recommendedName>
        <fullName evidence="1">Small ribosomal subunit protein eS4</fullName>
    </recommendedName>
    <alternativeName>
        <fullName>30S ribosomal protein S4e</fullName>
    </alternativeName>
</protein>
<reference key="1">
    <citation type="journal article" date="1996" name="Science">
        <title>Complete genome sequence of the methanogenic archaeon, Methanococcus jannaschii.</title>
        <authorList>
            <person name="Bult C.J."/>
            <person name="White O."/>
            <person name="Olsen G.J."/>
            <person name="Zhou L."/>
            <person name="Fleischmann R.D."/>
            <person name="Sutton G.G."/>
            <person name="Blake J.A."/>
            <person name="FitzGerald L.M."/>
            <person name="Clayton R.A."/>
            <person name="Gocayne J.D."/>
            <person name="Kerlavage A.R."/>
            <person name="Dougherty B.A."/>
            <person name="Tomb J.-F."/>
            <person name="Adams M.D."/>
            <person name="Reich C.I."/>
            <person name="Overbeek R."/>
            <person name="Kirkness E.F."/>
            <person name="Weinstock K.G."/>
            <person name="Merrick J.M."/>
            <person name="Glodek A."/>
            <person name="Scott J.L."/>
            <person name="Geoghagen N.S.M."/>
            <person name="Weidman J.F."/>
            <person name="Fuhrmann J.L."/>
            <person name="Nguyen D."/>
            <person name="Utterback T.R."/>
            <person name="Kelley J.M."/>
            <person name="Peterson J.D."/>
            <person name="Sadow P.W."/>
            <person name="Hanna M.C."/>
            <person name="Cotton M.D."/>
            <person name="Roberts K.M."/>
            <person name="Hurst M.A."/>
            <person name="Kaine B.P."/>
            <person name="Borodovsky M."/>
            <person name="Klenk H.-P."/>
            <person name="Fraser C.M."/>
            <person name="Smith H.O."/>
            <person name="Woese C.R."/>
            <person name="Venter J.C."/>
        </authorList>
    </citation>
    <scope>NUCLEOTIDE SEQUENCE [LARGE SCALE GENOMIC DNA]</scope>
    <source>
        <strain>ATCC 43067 / DSM 2661 / JAL-1 / JCM 10045 / NBRC 100440</strain>
    </source>
</reference>
<comment type="similarity">
    <text evidence="1">Belongs to the eukaryotic ribosomal protein eS4 family.</text>
</comment>
<dbReference type="EMBL" id="L77117">
    <property type="protein sequence ID" value="AAB98457.1"/>
    <property type="molecule type" value="Genomic_DNA"/>
</dbReference>
<dbReference type="PIR" id="D64358">
    <property type="entry name" value="D64358"/>
</dbReference>
<dbReference type="RefSeq" id="WP_010869968.1">
    <property type="nucleotide sequence ID" value="NC_000909.1"/>
</dbReference>
<dbReference type="SMR" id="P54039"/>
<dbReference type="FunCoup" id="P54039">
    <property type="interactions" value="157"/>
</dbReference>
<dbReference type="STRING" id="243232.MJ_0468"/>
<dbReference type="PaxDb" id="243232-MJ_0468"/>
<dbReference type="EnsemblBacteria" id="AAB98457">
    <property type="protein sequence ID" value="AAB98457"/>
    <property type="gene ID" value="MJ_0468"/>
</dbReference>
<dbReference type="GeneID" id="1451330"/>
<dbReference type="KEGG" id="mja:MJ_0468"/>
<dbReference type="eggNOG" id="arCOG04093">
    <property type="taxonomic scope" value="Archaea"/>
</dbReference>
<dbReference type="HOGENOM" id="CLU_060400_0_0_2"/>
<dbReference type="InParanoid" id="P54039"/>
<dbReference type="OrthoDB" id="372073at2157"/>
<dbReference type="PhylomeDB" id="P54039"/>
<dbReference type="Proteomes" id="UP000000805">
    <property type="component" value="Chromosome"/>
</dbReference>
<dbReference type="GO" id="GO:0022627">
    <property type="term" value="C:cytosolic small ribosomal subunit"/>
    <property type="evidence" value="ECO:0000318"/>
    <property type="project" value="GO_Central"/>
</dbReference>
<dbReference type="GO" id="GO:0003723">
    <property type="term" value="F:RNA binding"/>
    <property type="evidence" value="ECO:0000318"/>
    <property type="project" value="GO_Central"/>
</dbReference>
<dbReference type="GO" id="GO:0019843">
    <property type="term" value="F:rRNA binding"/>
    <property type="evidence" value="ECO:0007669"/>
    <property type="project" value="UniProtKB-KW"/>
</dbReference>
<dbReference type="GO" id="GO:0003735">
    <property type="term" value="F:structural constituent of ribosome"/>
    <property type="evidence" value="ECO:0000318"/>
    <property type="project" value="GO_Central"/>
</dbReference>
<dbReference type="GO" id="GO:0006412">
    <property type="term" value="P:translation"/>
    <property type="evidence" value="ECO:0000318"/>
    <property type="project" value="GO_Central"/>
</dbReference>
<dbReference type="CDD" id="cd06087">
    <property type="entry name" value="KOW_RPS4"/>
    <property type="match status" value="1"/>
</dbReference>
<dbReference type="CDD" id="cd00165">
    <property type="entry name" value="S4"/>
    <property type="match status" value="1"/>
</dbReference>
<dbReference type="FunFam" id="2.30.30.30:FF:000090">
    <property type="entry name" value="30S ribosomal protein S4e"/>
    <property type="match status" value="1"/>
</dbReference>
<dbReference type="FunFam" id="3.10.290.10:FF:000002">
    <property type="entry name" value="40S ribosomal protein S4"/>
    <property type="match status" value="1"/>
</dbReference>
<dbReference type="Gene3D" id="2.30.30.30">
    <property type="match status" value="1"/>
</dbReference>
<dbReference type="Gene3D" id="2.40.50.740">
    <property type="match status" value="1"/>
</dbReference>
<dbReference type="Gene3D" id="3.10.290.10">
    <property type="entry name" value="RNA-binding S4 domain"/>
    <property type="match status" value="1"/>
</dbReference>
<dbReference type="HAMAP" id="MF_00485">
    <property type="entry name" value="Ribosomal_eS4"/>
    <property type="match status" value="1"/>
</dbReference>
<dbReference type="InterPro" id="IPR005824">
    <property type="entry name" value="KOW"/>
</dbReference>
<dbReference type="InterPro" id="IPR014722">
    <property type="entry name" value="Rib_uL2_dom2"/>
</dbReference>
<dbReference type="InterPro" id="IPR000876">
    <property type="entry name" value="Ribosomal_eS4"/>
</dbReference>
<dbReference type="InterPro" id="IPR013845">
    <property type="entry name" value="Ribosomal_eS4_central_region"/>
</dbReference>
<dbReference type="InterPro" id="IPR038237">
    <property type="entry name" value="Ribosomal_eS4_central_sf"/>
</dbReference>
<dbReference type="InterPro" id="IPR041982">
    <property type="entry name" value="Ribosomal_eS4_KOW"/>
</dbReference>
<dbReference type="InterPro" id="IPR013843">
    <property type="entry name" value="Ribosomal_eS4_N"/>
</dbReference>
<dbReference type="InterPro" id="IPR018199">
    <property type="entry name" value="Ribosomal_eS4_N_CS"/>
</dbReference>
<dbReference type="InterPro" id="IPR002942">
    <property type="entry name" value="S4_RNA-bd"/>
</dbReference>
<dbReference type="InterPro" id="IPR036986">
    <property type="entry name" value="S4_RNA-bd_sf"/>
</dbReference>
<dbReference type="NCBIfam" id="NF003312">
    <property type="entry name" value="PRK04313.1"/>
    <property type="match status" value="1"/>
</dbReference>
<dbReference type="PANTHER" id="PTHR11581">
    <property type="entry name" value="30S/40S RIBOSOMAL PROTEIN S4"/>
    <property type="match status" value="1"/>
</dbReference>
<dbReference type="PANTHER" id="PTHR11581:SF0">
    <property type="entry name" value="SMALL RIBOSOMAL SUBUNIT PROTEIN ES4"/>
    <property type="match status" value="1"/>
</dbReference>
<dbReference type="Pfam" id="PF00467">
    <property type="entry name" value="KOW"/>
    <property type="match status" value="1"/>
</dbReference>
<dbReference type="Pfam" id="PF00900">
    <property type="entry name" value="Ribosomal_S4e"/>
    <property type="match status" value="1"/>
</dbReference>
<dbReference type="Pfam" id="PF08071">
    <property type="entry name" value="RS4NT"/>
    <property type="match status" value="1"/>
</dbReference>
<dbReference type="Pfam" id="PF01479">
    <property type="entry name" value="S4"/>
    <property type="match status" value="1"/>
</dbReference>
<dbReference type="PIRSF" id="PIRSF002116">
    <property type="entry name" value="Ribosomal_S4"/>
    <property type="match status" value="1"/>
</dbReference>
<dbReference type="SMART" id="SM00739">
    <property type="entry name" value="KOW"/>
    <property type="match status" value="1"/>
</dbReference>
<dbReference type="SMART" id="SM00363">
    <property type="entry name" value="S4"/>
    <property type="match status" value="1"/>
</dbReference>
<dbReference type="SUPFAM" id="SSF55174">
    <property type="entry name" value="Alpha-L RNA-binding motif"/>
    <property type="match status" value="1"/>
</dbReference>
<dbReference type="PROSITE" id="PS00528">
    <property type="entry name" value="RIBOSOMAL_S4E"/>
    <property type="match status" value="1"/>
</dbReference>
<dbReference type="PROSITE" id="PS50889">
    <property type="entry name" value="S4"/>
    <property type="match status" value="1"/>
</dbReference>
<feature type="chain" id="PRO_0000130849" description="Small ribosomal subunit protein eS4">
    <location>
        <begin position="1"/>
        <end position="244"/>
    </location>
</feature>
<feature type="domain" description="S4 RNA-binding">
    <location>
        <begin position="43"/>
        <end position="108"/>
    </location>
</feature>
<gene>
    <name type="primary">rps4e</name>
    <name type="ordered locus">MJ0468</name>
</gene>
<proteinExistence type="inferred from homology"/>
<keyword id="KW-1185">Reference proteome</keyword>
<keyword id="KW-0687">Ribonucleoprotein</keyword>
<keyword id="KW-0689">Ribosomal protein</keyword>
<keyword id="KW-0694">RNA-binding</keyword>
<keyword id="KW-0699">rRNA-binding</keyword>
<name>RS4E_METJA</name>
<evidence type="ECO:0000305" key="1"/>
<accession>P54039</accession>